<protein>
    <recommendedName>
        <fullName>Melanocyte-stimulating hormone receptor</fullName>
        <shortName>MSH-R</shortName>
    </recommendedName>
    <alternativeName>
        <fullName>Melanocortin receptor 1</fullName>
        <shortName>MC1-R</shortName>
    </alternativeName>
</protein>
<organism>
    <name type="scientific">Leontopithecus rosalia</name>
    <name type="common">Golden lion tamarin</name>
    <dbReference type="NCBI Taxonomy" id="30588"/>
    <lineage>
        <taxon>Eukaryota</taxon>
        <taxon>Metazoa</taxon>
        <taxon>Chordata</taxon>
        <taxon>Craniata</taxon>
        <taxon>Vertebrata</taxon>
        <taxon>Euteleostomi</taxon>
        <taxon>Mammalia</taxon>
        <taxon>Eutheria</taxon>
        <taxon>Euarchontoglires</taxon>
        <taxon>Primates</taxon>
        <taxon>Haplorrhini</taxon>
        <taxon>Platyrrhini</taxon>
        <taxon>Cebidae</taxon>
        <taxon>Callitrichinae</taxon>
        <taxon>Leontopithecus</taxon>
    </lineage>
</organism>
<feature type="chain" id="PRO_0000069825" description="Melanocyte-stimulating hormone receptor">
    <location>
        <begin position="1"/>
        <end position="318"/>
    </location>
</feature>
<feature type="topological domain" description="Extracellular" evidence="2">
    <location>
        <begin position="1"/>
        <end position="37"/>
    </location>
</feature>
<feature type="transmembrane region" description="Helical; Name=1" evidence="2">
    <location>
        <begin position="38"/>
        <end position="63"/>
    </location>
</feature>
<feature type="topological domain" description="Cytoplasmic" evidence="2">
    <location>
        <begin position="64"/>
        <end position="72"/>
    </location>
</feature>
<feature type="transmembrane region" description="Helical; Name=2" evidence="2">
    <location>
        <begin position="73"/>
        <end position="93"/>
    </location>
</feature>
<feature type="topological domain" description="Extracellular" evidence="2">
    <location>
        <begin position="94"/>
        <end position="118"/>
    </location>
</feature>
<feature type="transmembrane region" description="Helical; Name=3" evidence="2">
    <location>
        <begin position="119"/>
        <end position="140"/>
    </location>
</feature>
<feature type="topological domain" description="Cytoplasmic" evidence="2">
    <location>
        <begin position="141"/>
        <end position="163"/>
    </location>
</feature>
<feature type="transmembrane region" description="Helical; Name=4" evidence="2">
    <location>
        <begin position="164"/>
        <end position="183"/>
    </location>
</feature>
<feature type="topological domain" description="Extracellular" evidence="2">
    <location>
        <begin position="184"/>
        <end position="191"/>
    </location>
</feature>
<feature type="transmembrane region" description="Helical; Name=5" evidence="2">
    <location>
        <begin position="192"/>
        <end position="211"/>
    </location>
</feature>
<feature type="topological domain" description="Cytoplasmic" evidence="2">
    <location>
        <begin position="212"/>
        <end position="240"/>
    </location>
</feature>
<feature type="transmembrane region" description="Helical; Name=6" evidence="2">
    <location>
        <begin position="241"/>
        <end position="266"/>
    </location>
</feature>
<feature type="topological domain" description="Extracellular" evidence="2">
    <location>
        <begin position="267"/>
        <end position="279"/>
    </location>
</feature>
<feature type="transmembrane region" description="Helical; Name=7" evidence="2">
    <location>
        <begin position="280"/>
        <end position="300"/>
    </location>
</feature>
<feature type="topological domain" description="Cytoplasmic" evidence="2">
    <location>
        <begin position="301"/>
        <end position="317"/>
    </location>
</feature>
<feature type="glycosylation site" description="N-linked (GlcNAc...) asparagine" evidence="2">
    <location>
        <position position="29"/>
    </location>
</feature>
<comment type="function">
    <text evidence="1">Receptor for MSH (alpha, beta and gamma) and ACTH. The activity of this receptor is mediated by G proteins which activate adenylate cyclase. Mediates melanogenesis, the production of eumelanin (black/brown) and phaeomelanin (red/yellow), via regulation of cAMP signaling in melanocytes.</text>
</comment>
<comment type="subunit">
    <text evidence="1">Interacts with MGRN1, but does not undergo MGRN1-mediated ubiquitination; this interaction competes with GNAS-binding and thus inhibits agonist-induced cAMP production. Interacts with OPN3; the interaction results in a decrease in MC1R-mediated cAMP signaling and ultimately a decrease in melanin production in melanocytes.</text>
</comment>
<comment type="subcellular location">
    <subcellularLocation>
        <location evidence="1">Cell membrane</location>
        <topology evidence="2">Multi-pass membrane protein</topology>
    </subcellularLocation>
</comment>
<comment type="similarity">
    <text evidence="3">Belongs to the G-protein coupled receptor 1 family.</text>
</comment>
<dbReference type="EMBL" id="AY205114">
    <property type="protein sequence ID" value="AAP30988.1"/>
    <property type="molecule type" value="Genomic_DNA"/>
</dbReference>
<dbReference type="SMR" id="Q864I3"/>
<dbReference type="GlyCosmos" id="Q864I3">
    <property type="glycosylation" value="1 site, No reported glycans"/>
</dbReference>
<dbReference type="GO" id="GO:0005886">
    <property type="term" value="C:plasma membrane"/>
    <property type="evidence" value="ECO:0000250"/>
    <property type="project" value="UniProtKB"/>
</dbReference>
<dbReference type="GO" id="GO:0004980">
    <property type="term" value="F:melanocyte-stimulating hormone receptor activity"/>
    <property type="evidence" value="ECO:0007669"/>
    <property type="project" value="InterPro"/>
</dbReference>
<dbReference type="GO" id="GO:0007189">
    <property type="term" value="P:adenylate cyclase-activating G protein-coupled receptor signaling pathway"/>
    <property type="evidence" value="ECO:0007669"/>
    <property type="project" value="UniProtKB-ARBA"/>
</dbReference>
<dbReference type="FunFam" id="1.20.1070.10:FF:000211">
    <property type="entry name" value="Melanocyte-stimulating hormone receptor"/>
    <property type="match status" value="1"/>
</dbReference>
<dbReference type="Gene3D" id="1.20.1070.10">
    <property type="entry name" value="Rhodopsin 7-helix transmembrane proteins"/>
    <property type="match status" value="1"/>
</dbReference>
<dbReference type="InterPro" id="IPR000276">
    <property type="entry name" value="GPCR_Rhodpsn"/>
</dbReference>
<dbReference type="InterPro" id="IPR017452">
    <property type="entry name" value="GPCR_Rhodpsn_7TM"/>
</dbReference>
<dbReference type="InterPro" id="IPR001671">
    <property type="entry name" value="Melcrt_ACTH_rcpt"/>
</dbReference>
<dbReference type="InterPro" id="IPR000761">
    <property type="entry name" value="MSH_rcpt"/>
</dbReference>
<dbReference type="PANTHER" id="PTHR22750">
    <property type="entry name" value="G-PROTEIN COUPLED RECEPTOR"/>
    <property type="match status" value="1"/>
</dbReference>
<dbReference type="Pfam" id="PF00001">
    <property type="entry name" value="7tm_1"/>
    <property type="match status" value="1"/>
</dbReference>
<dbReference type="PRINTS" id="PR00237">
    <property type="entry name" value="GPCRRHODOPSN"/>
</dbReference>
<dbReference type="PRINTS" id="PR00534">
    <property type="entry name" value="MCRFAMILY"/>
</dbReference>
<dbReference type="PRINTS" id="PR00536">
    <property type="entry name" value="MELNOCYTESHR"/>
</dbReference>
<dbReference type="SMART" id="SM01381">
    <property type="entry name" value="7TM_GPCR_Srsx"/>
    <property type="match status" value="1"/>
</dbReference>
<dbReference type="SUPFAM" id="SSF81321">
    <property type="entry name" value="Family A G protein-coupled receptor-like"/>
    <property type="match status" value="1"/>
</dbReference>
<dbReference type="PROSITE" id="PS00237">
    <property type="entry name" value="G_PROTEIN_RECEP_F1_1"/>
    <property type="match status" value="1"/>
</dbReference>
<dbReference type="PROSITE" id="PS50262">
    <property type="entry name" value="G_PROTEIN_RECEP_F1_2"/>
    <property type="match status" value="1"/>
</dbReference>
<accession>Q864I3</accession>
<proteinExistence type="inferred from homology"/>
<name>MSHR_LEORO</name>
<evidence type="ECO:0000250" key="1">
    <source>
        <dbReference type="UniProtKB" id="Q01726"/>
    </source>
</evidence>
<evidence type="ECO:0000255" key="2"/>
<evidence type="ECO:0000255" key="3">
    <source>
        <dbReference type="PROSITE-ProRule" id="PRU00521"/>
    </source>
</evidence>
<gene>
    <name type="primary">MC1R</name>
</gene>
<sequence>MPMQGAQRKLLGSLNSTPTATSNLGLAANRTGAPCLELPIPNGLFLSLGLVSLVENVLVVAAIAKNRNLHSSMYCFICCLALSDLLVSGSNMLETAVILLLEAGVLATRASVVQQLHNTIDVLTCSSMLCSLCFLGAIAVDRYISIFYALRYHSIMTLPRAQRAVAAIWVASVLSSTLFITYYDHAAVLLCLMVFFLAMLVLMAVLYVHMLARARQHAQGIIRLHKRQPPAHKGFGLRGAATLTILLGIFFLCWGPFFLCLTLVVFCPQHLTCNCIFKNFKVFLTLIICNTIIDPLIYAFRSQELRRMLKEVLGRGRW</sequence>
<keyword id="KW-1003">Cell membrane</keyword>
<keyword id="KW-0297">G-protein coupled receptor</keyword>
<keyword id="KW-0325">Glycoprotein</keyword>
<keyword id="KW-0472">Membrane</keyword>
<keyword id="KW-0675">Receptor</keyword>
<keyword id="KW-0807">Transducer</keyword>
<keyword id="KW-0812">Transmembrane</keyword>
<keyword id="KW-1133">Transmembrane helix</keyword>
<reference key="1">
    <citation type="journal article" date="2003" name="Am. J. Phys. Anthropol.">
        <title>Evolution of a pigmentation gene, the melanocortin-1 receptor, in primates.</title>
        <authorList>
            <person name="Mundy N.I."/>
            <person name="Kelly J."/>
        </authorList>
    </citation>
    <scope>NUCLEOTIDE SEQUENCE [GENOMIC DNA]</scope>
    <source>
        <strain>Isolate 490</strain>
    </source>
</reference>